<keyword id="KW-0067">ATP-binding</keyword>
<keyword id="KW-0173">Coenzyme A biosynthesis</keyword>
<keyword id="KW-0963">Cytoplasm</keyword>
<keyword id="KW-0418">Kinase</keyword>
<keyword id="KW-0547">Nucleotide-binding</keyword>
<keyword id="KW-0808">Transferase</keyword>
<protein>
    <recommendedName>
        <fullName evidence="1">Pantothenate kinase</fullName>
        <ecNumber evidence="1">2.7.1.33</ecNumber>
    </recommendedName>
    <alternativeName>
        <fullName evidence="1">Pantothenic acid kinase</fullName>
    </alternativeName>
</protein>
<feature type="chain" id="PRO_1000043246" description="Pantothenate kinase">
    <location>
        <begin position="1"/>
        <end position="310"/>
    </location>
</feature>
<feature type="binding site" evidence="1">
    <location>
        <begin position="95"/>
        <end position="102"/>
    </location>
    <ligand>
        <name>ATP</name>
        <dbReference type="ChEBI" id="CHEBI:30616"/>
    </ligand>
</feature>
<evidence type="ECO:0000255" key="1">
    <source>
        <dbReference type="HAMAP-Rule" id="MF_00215"/>
    </source>
</evidence>
<comment type="catalytic activity">
    <reaction evidence="1">
        <text>(R)-pantothenate + ATP = (R)-4'-phosphopantothenate + ADP + H(+)</text>
        <dbReference type="Rhea" id="RHEA:16373"/>
        <dbReference type="ChEBI" id="CHEBI:10986"/>
        <dbReference type="ChEBI" id="CHEBI:15378"/>
        <dbReference type="ChEBI" id="CHEBI:29032"/>
        <dbReference type="ChEBI" id="CHEBI:30616"/>
        <dbReference type="ChEBI" id="CHEBI:456216"/>
        <dbReference type="EC" id="2.7.1.33"/>
    </reaction>
</comment>
<comment type="pathway">
    <text evidence="1">Cofactor biosynthesis; coenzyme A biosynthesis; CoA from (R)-pantothenate: step 1/5.</text>
</comment>
<comment type="subcellular location">
    <subcellularLocation>
        <location evidence="1">Cytoplasm</location>
    </subcellularLocation>
</comment>
<comment type="similarity">
    <text evidence="1">Belongs to the prokaryotic pantothenate kinase family.</text>
</comment>
<gene>
    <name evidence="1" type="primary">coaA</name>
    <name type="ordered locus">RHA1_ro05857</name>
</gene>
<proteinExistence type="inferred from homology"/>
<sequence length="310" mass="35538">MARTSESSPYVEFDRKQWRTLRKSTPLVLTEEELYGLRGLGEQIDLEEVAEVYLPLSRLIHLQVAARQRLFAATATFLGEKHPDQQVPFVIGVAGSVAVGKSTTARVLQALLARWEHHPRVDLVTTDGFLYPTAELNRRGIMHRKGFPESYDRRKLLRFVTEVKSGAEEVAAPVYSHISYDIIPGQYHLIRQPDILIIEGLNVLQTGPRLMVSDLFDFSIYVDARIEDIENWYIQRFLALRKTSFSDPDAHFHHYAGLSDRDATAAAQEIWHNINRPNLVENILPTRPRATLVLRKDANHSINRLRLRKL</sequence>
<name>COAA_RHOJR</name>
<accession>Q0S4A2</accession>
<reference key="1">
    <citation type="journal article" date="2006" name="Proc. Natl. Acad. Sci. U.S.A.">
        <title>The complete genome of Rhodococcus sp. RHA1 provides insights into a catabolic powerhouse.</title>
        <authorList>
            <person name="McLeod M.P."/>
            <person name="Warren R.L."/>
            <person name="Hsiao W.W.L."/>
            <person name="Araki N."/>
            <person name="Myhre M."/>
            <person name="Fernandes C."/>
            <person name="Miyazawa D."/>
            <person name="Wong W."/>
            <person name="Lillquist A.L."/>
            <person name="Wang D."/>
            <person name="Dosanjh M."/>
            <person name="Hara H."/>
            <person name="Petrescu A."/>
            <person name="Morin R.D."/>
            <person name="Yang G."/>
            <person name="Stott J.M."/>
            <person name="Schein J.E."/>
            <person name="Shin H."/>
            <person name="Smailus D."/>
            <person name="Siddiqui A.S."/>
            <person name="Marra M.A."/>
            <person name="Jones S.J.M."/>
            <person name="Holt R."/>
            <person name="Brinkman F.S.L."/>
            <person name="Miyauchi K."/>
            <person name="Fukuda M."/>
            <person name="Davies J.E."/>
            <person name="Mohn W.W."/>
            <person name="Eltis L.D."/>
        </authorList>
    </citation>
    <scope>NUCLEOTIDE SEQUENCE [LARGE SCALE GENOMIC DNA]</scope>
    <source>
        <strain>RHA1</strain>
    </source>
</reference>
<dbReference type="EC" id="2.7.1.33" evidence="1"/>
<dbReference type="EMBL" id="CP000431">
    <property type="protein sequence ID" value="ABG97634.1"/>
    <property type="molecule type" value="Genomic_DNA"/>
</dbReference>
<dbReference type="RefSeq" id="WP_009479106.1">
    <property type="nucleotide sequence ID" value="NC_008268.1"/>
</dbReference>
<dbReference type="SMR" id="Q0S4A2"/>
<dbReference type="KEGG" id="rha:RHA1_ro05857"/>
<dbReference type="eggNOG" id="COG1072">
    <property type="taxonomic scope" value="Bacteria"/>
</dbReference>
<dbReference type="HOGENOM" id="CLU_053818_1_1_11"/>
<dbReference type="OrthoDB" id="1550976at2"/>
<dbReference type="UniPathway" id="UPA00241">
    <property type="reaction ID" value="UER00352"/>
</dbReference>
<dbReference type="Proteomes" id="UP000008710">
    <property type="component" value="Chromosome"/>
</dbReference>
<dbReference type="GO" id="GO:0005737">
    <property type="term" value="C:cytoplasm"/>
    <property type="evidence" value="ECO:0007669"/>
    <property type="project" value="UniProtKB-SubCell"/>
</dbReference>
<dbReference type="GO" id="GO:0005524">
    <property type="term" value="F:ATP binding"/>
    <property type="evidence" value="ECO:0007669"/>
    <property type="project" value="UniProtKB-UniRule"/>
</dbReference>
<dbReference type="GO" id="GO:0004594">
    <property type="term" value="F:pantothenate kinase activity"/>
    <property type="evidence" value="ECO:0007669"/>
    <property type="project" value="UniProtKB-UniRule"/>
</dbReference>
<dbReference type="GO" id="GO:0015937">
    <property type="term" value="P:coenzyme A biosynthetic process"/>
    <property type="evidence" value="ECO:0007669"/>
    <property type="project" value="UniProtKB-UniRule"/>
</dbReference>
<dbReference type="CDD" id="cd02025">
    <property type="entry name" value="PanK"/>
    <property type="match status" value="1"/>
</dbReference>
<dbReference type="FunFam" id="3.40.50.300:FF:000242">
    <property type="entry name" value="Pantothenate kinase"/>
    <property type="match status" value="1"/>
</dbReference>
<dbReference type="Gene3D" id="3.40.50.300">
    <property type="entry name" value="P-loop containing nucleotide triphosphate hydrolases"/>
    <property type="match status" value="1"/>
</dbReference>
<dbReference type="HAMAP" id="MF_00215">
    <property type="entry name" value="Pantothen_kinase_1"/>
    <property type="match status" value="1"/>
</dbReference>
<dbReference type="InterPro" id="IPR027417">
    <property type="entry name" value="P-loop_NTPase"/>
</dbReference>
<dbReference type="InterPro" id="IPR004566">
    <property type="entry name" value="PanK"/>
</dbReference>
<dbReference type="InterPro" id="IPR006083">
    <property type="entry name" value="PRK/URK"/>
</dbReference>
<dbReference type="NCBIfam" id="TIGR00554">
    <property type="entry name" value="panK_bact"/>
    <property type="match status" value="1"/>
</dbReference>
<dbReference type="PANTHER" id="PTHR10285">
    <property type="entry name" value="URIDINE KINASE"/>
    <property type="match status" value="1"/>
</dbReference>
<dbReference type="Pfam" id="PF00485">
    <property type="entry name" value="PRK"/>
    <property type="match status" value="1"/>
</dbReference>
<dbReference type="PIRSF" id="PIRSF000545">
    <property type="entry name" value="Pantothenate_kin"/>
    <property type="match status" value="1"/>
</dbReference>
<dbReference type="SUPFAM" id="SSF52540">
    <property type="entry name" value="P-loop containing nucleoside triphosphate hydrolases"/>
    <property type="match status" value="1"/>
</dbReference>
<organism>
    <name type="scientific">Rhodococcus jostii (strain RHA1)</name>
    <dbReference type="NCBI Taxonomy" id="101510"/>
    <lineage>
        <taxon>Bacteria</taxon>
        <taxon>Bacillati</taxon>
        <taxon>Actinomycetota</taxon>
        <taxon>Actinomycetes</taxon>
        <taxon>Mycobacteriales</taxon>
        <taxon>Nocardiaceae</taxon>
        <taxon>Rhodococcus</taxon>
    </lineage>
</organism>